<organism>
    <name type="scientific">Homo sapiens</name>
    <name type="common">Human</name>
    <dbReference type="NCBI Taxonomy" id="9606"/>
    <lineage>
        <taxon>Eukaryota</taxon>
        <taxon>Metazoa</taxon>
        <taxon>Chordata</taxon>
        <taxon>Craniata</taxon>
        <taxon>Vertebrata</taxon>
        <taxon>Euteleostomi</taxon>
        <taxon>Mammalia</taxon>
        <taxon>Eutheria</taxon>
        <taxon>Euarchontoglires</taxon>
        <taxon>Primates</taxon>
        <taxon>Haplorrhini</taxon>
        <taxon>Catarrhini</taxon>
        <taxon>Hominidae</taxon>
        <taxon>Homo</taxon>
    </lineage>
</organism>
<name>NF2IP_HUMAN</name>
<dbReference type="EMBL" id="AK027545">
    <property type="protein sequence ID" value="BAB55189.1"/>
    <property type="molecule type" value="mRNA"/>
</dbReference>
<dbReference type="EMBL" id="AK074761">
    <property type="protein sequence ID" value="BAC11189.1"/>
    <property type="molecule type" value="mRNA"/>
</dbReference>
<dbReference type="EMBL" id="AK297333">
    <property type="protein sequence ID" value="BAH12551.1"/>
    <property type="molecule type" value="mRNA"/>
</dbReference>
<dbReference type="EMBL" id="AK316535">
    <property type="protein sequence ID" value="BAH14906.1"/>
    <property type="molecule type" value="mRNA"/>
</dbReference>
<dbReference type="EMBL" id="AF458593">
    <property type="protein sequence ID" value="AAM49721.1"/>
    <property type="status" value="ALT_FRAME"/>
    <property type="molecule type" value="mRNA"/>
</dbReference>
<dbReference type="EMBL" id="BC018311">
    <property type="protein sequence ID" value="AAH18311.2"/>
    <property type="molecule type" value="mRNA"/>
</dbReference>
<dbReference type="EMBL" id="BC021551">
    <property type="protein sequence ID" value="AAH21551.2"/>
    <property type="molecule type" value="mRNA"/>
</dbReference>
<dbReference type="EMBL" id="BC068007">
    <property type="protein sequence ID" value="AAH68007.1"/>
    <property type="molecule type" value="mRNA"/>
</dbReference>
<dbReference type="EMBL" id="BC080628">
    <property type="protein sequence ID" value="AAH80628.1"/>
    <property type="molecule type" value="mRNA"/>
</dbReference>
<dbReference type="EMBL" id="BC101741">
    <property type="protein sequence ID" value="AAI01742.1"/>
    <property type="molecule type" value="mRNA"/>
</dbReference>
<dbReference type="EMBL" id="BC112182">
    <property type="protein sequence ID" value="AAI12183.1"/>
    <property type="molecule type" value="mRNA"/>
</dbReference>
<dbReference type="CCDS" id="CCDS10645.1">
    <molecule id="Q8NCF5-1"/>
</dbReference>
<dbReference type="RefSeq" id="NP_116204.3">
    <molecule id="Q8NCF5-1"/>
    <property type="nucleotide sequence ID" value="NM_032815.3"/>
</dbReference>
<dbReference type="PDB" id="2JXX">
    <property type="method" value="NMR"/>
    <property type="chains" value="A=342-419"/>
</dbReference>
<dbReference type="PDB" id="2L76">
    <property type="method" value="NMR"/>
    <property type="chains" value="A=244-338"/>
</dbReference>
<dbReference type="PDB" id="3RD2">
    <property type="method" value="X-ray"/>
    <property type="resolution" value="1.60 A"/>
    <property type="chains" value="A=345-419"/>
</dbReference>
<dbReference type="PDBsum" id="2JXX"/>
<dbReference type="PDBsum" id="2L76"/>
<dbReference type="PDBsum" id="3RD2"/>
<dbReference type="BMRB" id="Q8NCF5"/>
<dbReference type="SMR" id="Q8NCF5"/>
<dbReference type="BioGRID" id="124341">
    <property type="interactions" value="68"/>
</dbReference>
<dbReference type="FunCoup" id="Q8NCF5">
    <property type="interactions" value="1165"/>
</dbReference>
<dbReference type="IntAct" id="Q8NCF5">
    <property type="interactions" value="38"/>
</dbReference>
<dbReference type="MINT" id="Q8NCF5"/>
<dbReference type="STRING" id="9606.ENSP00000324792"/>
<dbReference type="GlyCosmos" id="Q8NCF5">
    <property type="glycosylation" value="1 site, 1 glycan"/>
</dbReference>
<dbReference type="GlyGen" id="Q8NCF5">
    <property type="glycosylation" value="1 site, 1 O-linked glycan (1 site)"/>
</dbReference>
<dbReference type="iPTMnet" id="Q8NCF5"/>
<dbReference type="PhosphoSitePlus" id="Q8NCF5"/>
<dbReference type="BioMuta" id="NFATC2IP"/>
<dbReference type="DMDM" id="74751188"/>
<dbReference type="jPOST" id="Q8NCF5"/>
<dbReference type="MassIVE" id="Q8NCF5"/>
<dbReference type="PaxDb" id="9606-ENSP00000324792"/>
<dbReference type="PeptideAtlas" id="Q8NCF5"/>
<dbReference type="ProteomicsDB" id="72887">
    <molecule id="Q8NCF5-1"/>
</dbReference>
<dbReference type="ProteomicsDB" id="72888">
    <molecule id="Q8NCF5-2"/>
</dbReference>
<dbReference type="ProteomicsDB" id="72889">
    <molecule id="Q8NCF5-3"/>
</dbReference>
<dbReference type="Pumba" id="Q8NCF5"/>
<dbReference type="TopDownProteomics" id="Q8NCF5-2">
    <molecule id="Q8NCF5-2"/>
</dbReference>
<dbReference type="Antibodypedia" id="26645">
    <property type="antibodies" value="88 antibodies from 23 providers"/>
</dbReference>
<dbReference type="DNASU" id="84901"/>
<dbReference type="Ensembl" id="ENST00000320805.9">
    <molecule id="Q8NCF5-1"/>
    <property type="protein sequence ID" value="ENSP00000324792.4"/>
    <property type="gene ID" value="ENSG00000176953.13"/>
</dbReference>
<dbReference type="Ensembl" id="ENST00000568148.1">
    <molecule id="Q8NCF5-3"/>
    <property type="protein sequence ID" value="ENSP00000454958.1"/>
    <property type="gene ID" value="ENSG00000176953.13"/>
</dbReference>
<dbReference type="GeneID" id="84901"/>
<dbReference type="KEGG" id="hsa:84901"/>
<dbReference type="MANE-Select" id="ENST00000320805.9">
    <property type="protein sequence ID" value="ENSP00000324792.4"/>
    <property type="RefSeq nucleotide sequence ID" value="NM_032815.4"/>
    <property type="RefSeq protein sequence ID" value="NP_116204.3"/>
</dbReference>
<dbReference type="UCSC" id="uc002dru.4">
    <molecule id="Q8NCF5-1"/>
    <property type="organism name" value="human"/>
</dbReference>
<dbReference type="AGR" id="HGNC:25906"/>
<dbReference type="CTD" id="84901"/>
<dbReference type="DisGeNET" id="84901"/>
<dbReference type="GeneCards" id="NFATC2IP"/>
<dbReference type="HGNC" id="HGNC:25906">
    <property type="gene designation" value="NFATC2IP"/>
</dbReference>
<dbReference type="HPA" id="ENSG00000176953">
    <property type="expression patterns" value="Low tissue specificity"/>
</dbReference>
<dbReference type="MalaCards" id="NFATC2IP"/>
<dbReference type="MIM" id="614525">
    <property type="type" value="gene"/>
</dbReference>
<dbReference type="neXtProt" id="NX_Q8NCF5"/>
<dbReference type="OpenTargets" id="ENSG00000176953"/>
<dbReference type="PharmGKB" id="PA134887712"/>
<dbReference type="VEuPathDB" id="HostDB:ENSG00000176953"/>
<dbReference type="eggNOG" id="KOG1769">
    <property type="taxonomic scope" value="Eukaryota"/>
</dbReference>
<dbReference type="GeneTree" id="ENSGT00390000007119"/>
<dbReference type="HOGENOM" id="CLU_055132_1_0_1"/>
<dbReference type="InParanoid" id="Q8NCF5"/>
<dbReference type="OMA" id="NVVDHMA"/>
<dbReference type="OrthoDB" id="442921at2759"/>
<dbReference type="PAN-GO" id="Q8NCF5">
    <property type="GO annotations" value="2 GO annotations based on evolutionary models"/>
</dbReference>
<dbReference type="PhylomeDB" id="Q8NCF5"/>
<dbReference type="TreeFam" id="TF328600"/>
<dbReference type="PathwayCommons" id="Q8NCF5"/>
<dbReference type="SignaLink" id="Q8NCF5"/>
<dbReference type="BioGRID-ORCS" id="84901">
    <property type="hits" value="159 hits in 1159 CRISPR screens"/>
</dbReference>
<dbReference type="ChiTaRS" id="NFATC2IP">
    <property type="organism name" value="human"/>
</dbReference>
<dbReference type="EvolutionaryTrace" id="Q8NCF5"/>
<dbReference type="GenomeRNAi" id="84901"/>
<dbReference type="Pharos" id="Q8NCF5">
    <property type="development level" value="Tbio"/>
</dbReference>
<dbReference type="PRO" id="PR:Q8NCF5"/>
<dbReference type="Proteomes" id="UP000005640">
    <property type="component" value="Chromosome 16"/>
</dbReference>
<dbReference type="RNAct" id="Q8NCF5">
    <property type="molecule type" value="protein"/>
</dbReference>
<dbReference type="Bgee" id="ENSG00000176953">
    <property type="expression patterns" value="Expressed in trabecular bone tissue and 214 other cell types or tissues"/>
</dbReference>
<dbReference type="ExpressionAtlas" id="Q8NCF5">
    <property type="expression patterns" value="baseline and differential"/>
</dbReference>
<dbReference type="GO" id="GO:0005737">
    <property type="term" value="C:cytoplasm"/>
    <property type="evidence" value="ECO:0007669"/>
    <property type="project" value="UniProtKB-SubCell"/>
</dbReference>
<dbReference type="GO" id="GO:0005634">
    <property type="term" value="C:nucleus"/>
    <property type="evidence" value="ECO:0007669"/>
    <property type="project" value="UniProtKB-SubCell"/>
</dbReference>
<dbReference type="GO" id="GO:0045944">
    <property type="term" value="P:positive regulation of transcription by RNA polymerase II"/>
    <property type="evidence" value="ECO:0000318"/>
    <property type="project" value="GO_Central"/>
</dbReference>
<dbReference type="GO" id="GO:0016925">
    <property type="term" value="P:protein sumoylation"/>
    <property type="evidence" value="ECO:0007669"/>
    <property type="project" value="UniProtKB-ARBA"/>
</dbReference>
<dbReference type="CDD" id="cd17078">
    <property type="entry name" value="Ubl_SLD1_NFATC2ip"/>
    <property type="match status" value="1"/>
</dbReference>
<dbReference type="CDD" id="cd17079">
    <property type="entry name" value="Ubl_SLD2_NFATC2ip"/>
    <property type="match status" value="1"/>
</dbReference>
<dbReference type="Gene3D" id="3.10.20.90">
    <property type="entry name" value="Phosphatidylinositol 3-kinase Catalytic Subunit, Chain A, domain 1"/>
    <property type="match status" value="2"/>
</dbReference>
<dbReference type="InterPro" id="IPR052324">
    <property type="entry name" value="NFATC2-Int_DNA_Repair"/>
</dbReference>
<dbReference type="InterPro" id="IPR022617">
    <property type="entry name" value="Rad60/SUMO-like_dom"/>
</dbReference>
<dbReference type="InterPro" id="IPR000626">
    <property type="entry name" value="Ubiquitin-like_dom"/>
</dbReference>
<dbReference type="InterPro" id="IPR029071">
    <property type="entry name" value="Ubiquitin-like_domsf"/>
</dbReference>
<dbReference type="PANTHER" id="PTHR47187">
    <property type="entry name" value="NFATC2-INTERACTING PROTEIN"/>
    <property type="match status" value="1"/>
</dbReference>
<dbReference type="PANTHER" id="PTHR47187:SF1">
    <property type="entry name" value="NFATC2-INTERACTING PROTEIN"/>
    <property type="match status" value="1"/>
</dbReference>
<dbReference type="Pfam" id="PF11976">
    <property type="entry name" value="Rad60-SLD"/>
    <property type="match status" value="1"/>
</dbReference>
<dbReference type="SMART" id="SM00213">
    <property type="entry name" value="UBQ"/>
    <property type="match status" value="2"/>
</dbReference>
<dbReference type="SUPFAM" id="SSF54236">
    <property type="entry name" value="Ubiquitin-like"/>
    <property type="match status" value="2"/>
</dbReference>
<dbReference type="PROSITE" id="PS50053">
    <property type="entry name" value="UBIQUITIN_2"/>
    <property type="match status" value="1"/>
</dbReference>
<keyword id="KW-0002">3D-structure</keyword>
<keyword id="KW-0025">Alternative splicing</keyword>
<keyword id="KW-0175">Coiled coil</keyword>
<keyword id="KW-0963">Cytoplasm</keyword>
<keyword id="KW-1017">Isopeptide bond</keyword>
<keyword id="KW-0488">Methylation</keyword>
<keyword id="KW-0539">Nucleus</keyword>
<keyword id="KW-0597">Phosphoprotein</keyword>
<keyword id="KW-1267">Proteomics identification</keyword>
<keyword id="KW-1185">Reference proteome</keyword>
<keyword id="KW-0832">Ubl conjugation</keyword>
<reference key="1">
    <citation type="journal article" date="2004" name="Nat. Genet.">
        <title>Complete sequencing and characterization of 21,243 full-length human cDNAs.</title>
        <authorList>
            <person name="Ota T."/>
            <person name="Suzuki Y."/>
            <person name="Nishikawa T."/>
            <person name="Otsuki T."/>
            <person name="Sugiyama T."/>
            <person name="Irie R."/>
            <person name="Wakamatsu A."/>
            <person name="Hayashi K."/>
            <person name="Sato H."/>
            <person name="Nagai K."/>
            <person name="Kimura K."/>
            <person name="Makita H."/>
            <person name="Sekine M."/>
            <person name="Obayashi M."/>
            <person name="Nishi T."/>
            <person name="Shibahara T."/>
            <person name="Tanaka T."/>
            <person name="Ishii S."/>
            <person name="Yamamoto J."/>
            <person name="Saito K."/>
            <person name="Kawai Y."/>
            <person name="Isono Y."/>
            <person name="Nakamura Y."/>
            <person name="Nagahari K."/>
            <person name="Murakami K."/>
            <person name="Yasuda T."/>
            <person name="Iwayanagi T."/>
            <person name="Wagatsuma M."/>
            <person name="Shiratori A."/>
            <person name="Sudo H."/>
            <person name="Hosoiri T."/>
            <person name="Kaku Y."/>
            <person name="Kodaira H."/>
            <person name="Kondo H."/>
            <person name="Sugawara M."/>
            <person name="Takahashi M."/>
            <person name="Kanda K."/>
            <person name="Yokoi T."/>
            <person name="Furuya T."/>
            <person name="Kikkawa E."/>
            <person name="Omura Y."/>
            <person name="Abe K."/>
            <person name="Kamihara K."/>
            <person name="Katsuta N."/>
            <person name="Sato K."/>
            <person name="Tanikawa M."/>
            <person name="Yamazaki M."/>
            <person name="Ninomiya K."/>
            <person name="Ishibashi T."/>
            <person name="Yamashita H."/>
            <person name="Murakawa K."/>
            <person name="Fujimori K."/>
            <person name="Tanai H."/>
            <person name="Kimata M."/>
            <person name="Watanabe M."/>
            <person name="Hiraoka S."/>
            <person name="Chiba Y."/>
            <person name="Ishida S."/>
            <person name="Ono Y."/>
            <person name="Takiguchi S."/>
            <person name="Watanabe S."/>
            <person name="Yosida M."/>
            <person name="Hotuta T."/>
            <person name="Kusano J."/>
            <person name="Kanehori K."/>
            <person name="Takahashi-Fujii A."/>
            <person name="Hara H."/>
            <person name="Tanase T.-O."/>
            <person name="Nomura Y."/>
            <person name="Togiya S."/>
            <person name="Komai F."/>
            <person name="Hara R."/>
            <person name="Takeuchi K."/>
            <person name="Arita M."/>
            <person name="Imose N."/>
            <person name="Musashino K."/>
            <person name="Yuuki H."/>
            <person name="Oshima A."/>
            <person name="Sasaki N."/>
            <person name="Aotsuka S."/>
            <person name="Yoshikawa Y."/>
            <person name="Matsunawa H."/>
            <person name="Ichihara T."/>
            <person name="Shiohata N."/>
            <person name="Sano S."/>
            <person name="Moriya S."/>
            <person name="Momiyama H."/>
            <person name="Satoh N."/>
            <person name="Takami S."/>
            <person name="Terashima Y."/>
            <person name="Suzuki O."/>
            <person name="Nakagawa S."/>
            <person name="Senoh A."/>
            <person name="Mizoguchi H."/>
            <person name="Goto Y."/>
            <person name="Shimizu F."/>
            <person name="Wakebe H."/>
            <person name="Hishigaki H."/>
            <person name="Watanabe T."/>
            <person name="Sugiyama A."/>
            <person name="Takemoto M."/>
            <person name="Kawakami B."/>
            <person name="Yamazaki M."/>
            <person name="Watanabe K."/>
            <person name="Kumagai A."/>
            <person name="Itakura S."/>
            <person name="Fukuzumi Y."/>
            <person name="Fujimori Y."/>
            <person name="Komiyama M."/>
            <person name="Tashiro H."/>
            <person name="Tanigami A."/>
            <person name="Fujiwara T."/>
            <person name="Ono T."/>
            <person name="Yamada K."/>
            <person name="Fujii Y."/>
            <person name="Ozaki K."/>
            <person name="Hirao M."/>
            <person name="Ohmori Y."/>
            <person name="Kawabata A."/>
            <person name="Hikiji T."/>
            <person name="Kobatake N."/>
            <person name="Inagaki H."/>
            <person name="Ikema Y."/>
            <person name="Okamoto S."/>
            <person name="Okitani R."/>
            <person name="Kawakami T."/>
            <person name="Noguchi S."/>
            <person name="Itoh T."/>
            <person name="Shigeta K."/>
            <person name="Senba T."/>
            <person name="Matsumura K."/>
            <person name="Nakajima Y."/>
            <person name="Mizuno T."/>
            <person name="Morinaga M."/>
            <person name="Sasaki M."/>
            <person name="Togashi T."/>
            <person name="Oyama M."/>
            <person name="Hata H."/>
            <person name="Watanabe M."/>
            <person name="Komatsu T."/>
            <person name="Mizushima-Sugano J."/>
            <person name="Satoh T."/>
            <person name="Shirai Y."/>
            <person name="Takahashi Y."/>
            <person name="Nakagawa K."/>
            <person name="Okumura K."/>
            <person name="Nagase T."/>
            <person name="Nomura N."/>
            <person name="Kikuchi H."/>
            <person name="Masuho Y."/>
            <person name="Yamashita R."/>
            <person name="Nakai K."/>
            <person name="Yada T."/>
            <person name="Nakamura Y."/>
            <person name="Ohara O."/>
            <person name="Isogai T."/>
            <person name="Sugano S."/>
        </authorList>
    </citation>
    <scope>NUCLEOTIDE SEQUENCE [LARGE SCALE MRNA] (ISOFORMS 1; 2 AND 3)</scope>
    <source>
        <tissue>Brain</tissue>
        <tissue>Uterus</tissue>
    </source>
</reference>
<reference key="2">
    <citation type="submission" date="2001-12" db="EMBL/GenBank/DDBJ databases">
        <authorList>
            <person name="Guo J.H."/>
            <person name="Zan Q."/>
            <person name="Yu L."/>
        </authorList>
    </citation>
    <scope>NUCLEOTIDE SEQUENCE [LARGE SCALE MRNA] (ISOFORM 1)</scope>
    <source>
        <tissue>Brain</tissue>
    </source>
</reference>
<reference key="3">
    <citation type="journal article" date="2004" name="Genome Res.">
        <title>The status, quality, and expansion of the NIH full-length cDNA project: the Mammalian Gene Collection (MGC).</title>
        <authorList>
            <consortium name="The MGC Project Team"/>
        </authorList>
    </citation>
    <scope>NUCLEOTIDE SEQUENCE [LARGE SCALE MRNA] (ISOFORMS 1 AND 3)</scope>
    <source>
        <tissue>Brain</tissue>
        <tissue>Eye</tissue>
        <tissue>Liver</tissue>
    </source>
</reference>
<reference key="4">
    <citation type="journal article" date="2006" name="Cell">
        <title>Global, in vivo, and site-specific phosphorylation dynamics in signaling networks.</title>
        <authorList>
            <person name="Olsen J.V."/>
            <person name="Blagoev B."/>
            <person name="Gnad F."/>
            <person name="Macek B."/>
            <person name="Kumar C."/>
            <person name="Mortensen P."/>
            <person name="Mann M."/>
        </authorList>
    </citation>
    <scope>PHOSPHORYLATION [LARGE SCALE ANALYSIS] AT SER-204</scope>
    <scope>IDENTIFICATION BY MASS SPECTROMETRY [LARGE SCALE ANALYSIS]</scope>
    <source>
        <tissue>Cervix carcinoma</tissue>
    </source>
</reference>
<reference key="5">
    <citation type="journal article" date="2006" name="Nat. Biotechnol.">
        <title>A probability-based approach for high-throughput protein phosphorylation analysis and site localization.</title>
        <authorList>
            <person name="Beausoleil S.A."/>
            <person name="Villen J."/>
            <person name="Gerber S.A."/>
            <person name="Rush J."/>
            <person name="Gygi S.P."/>
        </authorList>
    </citation>
    <scope>PHOSPHORYLATION [LARGE SCALE ANALYSIS] AT THR-316</scope>
    <scope>IDENTIFICATION BY MASS SPECTROMETRY [LARGE SCALE ANALYSIS]</scope>
    <source>
        <tissue>Cervix carcinoma</tissue>
    </source>
</reference>
<reference key="6">
    <citation type="journal article" date="2008" name="Proc. Natl. Acad. Sci. U.S.A.">
        <title>A quantitative atlas of mitotic phosphorylation.</title>
        <authorList>
            <person name="Dephoure N."/>
            <person name="Zhou C."/>
            <person name="Villen J."/>
            <person name="Beausoleil S.A."/>
            <person name="Bakalarski C.E."/>
            <person name="Elledge S.J."/>
            <person name="Gygi S.P."/>
        </authorList>
    </citation>
    <scope>PHOSPHORYLATION [LARGE SCALE ANALYSIS] AT SER-127; SER-198; SER-201; SER-204 AND SER-390</scope>
    <scope>IDENTIFICATION BY MASS SPECTROMETRY [LARGE SCALE ANALYSIS]</scope>
    <source>
        <tissue>Cervix carcinoma</tissue>
    </source>
</reference>
<reference key="7">
    <citation type="journal article" date="2009" name="Sci. Signal.">
        <title>Quantitative phosphoproteomic analysis of T cell receptor signaling reveals system-wide modulation of protein-protein interactions.</title>
        <authorList>
            <person name="Mayya V."/>
            <person name="Lundgren D.H."/>
            <person name="Hwang S.-I."/>
            <person name="Rezaul K."/>
            <person name="Wu L."/>
            <person name="Eng J.K."/>
            <person name="Rodionov V."/>
            <person name="Han D.K."/>
        </authorList>
    </citation>
    <scope>PHOSPHORYLATION [LARGE SCALE ANALYSIS] AT SER-204</scope>
    <scope>IDENTIFICATION BY MASS SPECTROMETRY [LARGE SCALE ANALYSIS]</scope>
    <source>
        <tissue>Leukemic T-cell</tissue>
    </source>
</reference>
<reference key="8">
    <citation type="journal article" date="2010" name="Sci. Signal.">
        <title>Quantitative phosphoproteomics reveals widespread full phosphorylation site occupancy during mitosis.</title>
        <authorList>
            <person name="Olsen J.V."/>
            <person name="Vermeulen M."/>
            <person name="Santamaria A."/>
            <person name="Kumar C."/>
            <person name="Miller M.L."/>
            <person name="Jensen L.J."/>
            <person name="Gnad F."/>
            <person name="Cox J."/>
            <person name="Jensen T.S."/>
            <person name="Nigg E.A."/>
            <person name="Brunak S."/>
            <person name="Mann M."/>
        </authorList>
    </citation>
    <scope>PHOSPHORYLATION [LARGE SCALE ANALYSIS] AT SER-204; SER-220; SER-314; THR-318 AND SER-369</scope>
    <scope>IDENTIFICATION BY MASS SPECTROMETRY [LARGE SCALE ANALYSIS]</scope>
    <source>
        <tissue>Cervix carcinoma</tissue>
    </source>
</reference>
<reference key="9">
    <citation type="journal article" date="2011" name="Sci. Signal.">
        <title>System-wide temporal characterization of the proteome and phosphoproteome of human embryonic stem cell differentiation.</title>
        <authorList>
            <person name="Rigbolt K.T."/>
            <person name="Prokhorova T.A."/>
            <person name="Akimov V."/>
            <person name="Henningsen J."/>
            <person name="Johansen P.T."/>
            <person name="Kratchmarova I."/>
            <person name="Kassem M."/>
            <person name="Mann M."/>
            <person name="Olsen J.V."/>
            <person name="Blagoev B."/>
        </authorList>
    </citation>
    <scope>PHOSPHORYLATION [LARGE SCALE ANALYSIS] AT SER-204 AND SER-369</scope>
    <scope>IDENTIFICATION BY MASS SPECTROMETRY [LARGE SCALE ANALYSIS]</scope>
</reference>
<reference key="10">
    <citation type="journal article" date="2013" name="J. Proteome Res.">
        <title>Toward a comprehensive characterization of a human cancer cell phosphoproteome.</title>
        <authorList>
            <person name="Zhou H."/>
            <person name="Di Palma S."/>
            <person name="Preisinger C."/>
            <person name="Peng M."/>
            <person name="Polat A.N."/>
            <person name="Heck A.J."/>
            <person name="Mohammed S."/>
        </authorList>
    </citation>
    <scope>PHOSPHORYLATION [LARGE SCALE ANALYSIS] AT SER-84; SER-201; SER-204; SER-314; SER-369 AND SER-390</scope>
    <scope>IDENTIFICATION BY MASS SPECTROMETRY [LARGE SCALE ANALYSIS]</scope>
    <source>
        <tissue>Cervix carcinoma</tissue>
        <tissue>Erythroleukemia</tissue>
    </source>
</reference>
<reference key="11">
    <citation type="journal article" date="2014" name="J. Proteomics">
        <title>An enzyme assisted RP-RPLC approach for in-depth analysis of human liver phosphoproteome.</title>
        <authorList>
            <person name="Bian Y."/>
            <person name="Song C."/>
            <person name="Cheng K."/>
            <person name="Dong M."/>
            <person name="Wang F."/>
            <person name="Huang J."/>
            <person name="Sun D."/>
            <person name="Wang L."/>
            <person name="Ye M."/>
            <person name="Zou H."/>
        </authorList>
    </citation>
    <scope>PHOSPHORYLATION [LARGE SCALE ANALYSIS] AT SER-204</scope>
    <scope>IDENTIFICATION BY MASS SPECTROMETRY [LARGE SCALE ANALYSIS]</scope>
    <source>
        <tissue>Liver</tissue>
    </source>
</reference>
<reference key="12">
    <citation type="journal article" date="2017" name="Nat. Struct. Mol. Biol.">
        <title>Site-specific mapping of the human SUMO proteome reveals co-modification with phosphorylation.</title>
        <authorList>
            <person name="Hendriks I.A."/>
            <person name="Lyon D."/>
            <person name="Young C."/>
            <person name="Jensen L.J."/>
            <person name="Vertegaal A.C."/>
            <person name="Nielsen M.L."/>
        </authorList>
    </citation>
    <scope>SUMOYLATION [LARGE SCALE ANALYSIS] AT LYS-129 AND LYS-131</scope>
    <scope>IDENTIFICATION BY MASS SPECTROMETRY [LARGE SCALE ANALYSIS]</scope>
</reference>
<reference key="13">
    <citation type="submission" date="2010-12" db="PDB data bank">
        <title>Human NFATC2IP ubiquitin-like domains.</title>
        <authorList>
            <consortium name="Northeast structural genomics consortium (NESG)"/>
        </authorList>
    </citation>
    <scope>STRUCTURE BY NMR OF 244-419</scope>
</reference>
<gene>
    <name type="primary">NFATC2IP</name>
    <name type="synonym">NIP45</name>
</gene>
<evidence type="ECO:0000250" key="1"/>
<evidence type="ECO:0000250" key="2">
    <source>
        <dbReference type="UniProtKB" id="O09130"/>
    </source>
</evidence>
<evidence type="ECO:0000250" key="3">
    <source>
        <dbReference type="UniProtKB" id="Q6AYG7"/>
    </source>
</evidence>
<evidence type="ECO:0000255" key="4"/>
<evidence type="ECO:0000255" key="5">
    <source>
        <dbReference type="PROSITE-ProRule" id="PRU00214"/>
    </source>
</evidence>
<evidence type="ECO:0000256" key="6">
    <source>
        <dbReference type="SAM" id="MobiDB-lite"/>
    </source>
</evidence>
<evidence type="ECO:0000303" key="7">
    <source>
    </source>
</evidence>
<evidence type="ECO:0000303" key="8">
    <source>
    </source>
</evidence>
<evidence type="ECO:0000305" key="9"/>
<evidence type="ECO:0007744" key="10">
    <source>
    </source>
</evidence>
<evidence type="ECO:0007744" key="11">
    <source>
    </source>
</evidence>
<evidence type="ECO:0007744" key="12">
    <source>
    </source>
</evidence>
<evidence type="ECO:0007744" key="13">
    <source>
    </source>
</evidence>
<evidence type="ECO:0007744" key="14">
    <source>
    </source>
</evidence>
<evidence type="ECO:0007744" key="15">
    <source>
    </source>
</evidence>
<evidence type="ECO:0007744" key="16">
    <source>
    </source>
</evidence>
<evidence type="ECO:0007744" key="17">
    <source>
    </source>
</evidence>
<evidence type="ECO:0007744" key="18">
    <source>
    </source>
</evidence>
<evidence type="ECO:0007829" key="19">
    <source>
        <dbReference type="PDB" id="2JXX"/>
    </source>
</evidence>
<evidence type="ECO:0007829" key="20">
    <source>
        <dbReference type="PDB" id="2L76"/>
    </source>
</evidence>
<evidence type="ECO:0007829" key="21">
    <source>
        <dbReference type="PDB" id="3RD2"/>
    </source>
</evidence>
<feature type="chain" id="PRO_0000281008" description="NFATC2-interacting protein">
    <location>
        <begin position="1"/>
        <end position="419"/>
    </location>
</feature>
<feature type="domain" description="Ubiquitin-like" evidence="5">
    <location>
        <begin position="348"/>
        <end position="419"/>
    </location>
</feature>
<feature type="region of interest" description="Disordered" evidence="6">
    <location>
        <begin position="1"/>
        <end position="131"/>
    </location>
</feature>
<feature type="region of interest" description="Disordered" evidence="6">
    <location>
        <begin position="151"/>
        <end position="215"/>
    </location>
</feature>
<feature type="coiled-coil region" evidence="4">
    <location>
        <begin position="209"/>
        <end position="231"/>
    </location>
</feature>
<feature type="compositionally biased region" description="Gly residues" evidence="6">
    <location>
        <begin position="11"/>
        <end position="27"/>
    </location>
</feature>
<feature type="compositionally biased region" description="Low complexity" evidence="6">
    <location>
        <begin position="35"/>
        <end position="51"/>
    </location>
</feature>
<feature type="compositionally biased region" description="Basic and acidic residues" evidence="6">
    <location>
        <begin position="180"/>
        <end position="192"/>
    </location>
</feature>
<feature type="modified residue" description="Phosphoserine" evidence="3">
    <location>
        <position position="54"/>
    </location>
</feature>
<feature type="modified residue" description="Phosphoserine" evidence="16">
    <location>
        <position position="84"/>
    </location>
</feature>
<feature type="modified residue" description="Phosphoserine" evidence="2">
    <location>
        <position position="88"/>
    </location>
</feature>
<feature type="modified residue" description="Phosphoserine" evidence="2">
    <location>
        <position position="90"/>
    </location>
</feature>
<feature type="modified residue" description="Phosphoserine" evidence="2">
    <location>
        <position position="92"/>
    </location>
</feature>
<feature type="modified residue" description="Phosphoserine" evidence="12">
    <location>
        <position position="127"/>
    </location>
</feature>
<feature type="modified residue" description="Phosphoserine" evidence="12">
    <location>
        <position position="198"/>
    </location>
</feature>
<feature type="modified residue" description="Phosphoserine" evidence="12 16">
    <location>
        <position position="201"/>
    </location>
</feature>
<feature type="modified residue" description="Phosphoserine" evidence="11 12 13 14 15 16 17">
    <location>
        <position position="204"/>
    </location>
</feature>
<feature type="modified residue" description="Phosphoserine" evidence="14">
    <location>
        <position position="220"/>
    </location>
</feature>
<feature type="modified residue" description="Phosphoserine" evidence="14 16">
    <location>
        <position position="314"/>
    </location>
</feature>
<feature type="modified residue" description="Phosphothreonine" evidence="10">
    <location>
        <position position="316"/>
    </location>
</feature>
<feature type="modified residue" description="Phosphothreonine" evidence="14">
    <location>
        <position position="318"/>
    </location>
</feature>
<feature type="modified residue" description="Phosphoserine" evidence="14 15 16">
    <location>
        <position position="369"/>
    </location>
</feature>
<feature type="modified residue" description="Phosphoserine" evidence="12 16">
    <location>
        <position position="390"/>
    </location>
</feature>
<feature type="cross-link" description="Glycyl lysine isopeptide (Lys-Gly) (interchain with G-Cter in SUMO2)" evidence="18">
    <location>
        <position position="129"/>
    </location>
</feature>
<feature type="cross-link" description="Glycyl lysine isopeptide (Lys-Gly) (interchain with G-Cter in SUMO2)" evidence="18">
    <location>
        <position position="131"/>
    </location>
</feature>
<feature type="splice variant" id="VSP_023931" description="In isoform 3." evidence="7 8">
    <location>
        <begin position="1"/>
        <end position="292"/>
    </location>
</feature>
<feature type="splice variant" id="VSP_023932" description="In isoform 2." evidence="7">
    <location>
        <begin position="1"/>
        <end position="281"/>
    </location>
</feature>
<feature type="sequence variant" id="VAR_031208" description="In dbSNP:rs7201257.">
    <original>R</original>
    <variation>W</variation>
    <location>
        <position position="33"/>
    </location>
</feature>
<feature type="strand" evidence="20">
    <location>
        <begin position="252"/>
        <end position="254"/>
    </location>
</feature>
<feature type="strand" evidence="20">
    <location>
        <begin position="265"/>
        <end position="270"/>
    </location>
</feature>
<feature type="strand" evidence="20">
    <location>
        <begin position="272"/>
        <end position="280"/>
    </location>
</feature>
<feature type="strand" evidence="20">
    <location>
        <begin position="282"/>
        <end position="284"/>
    </location>
</feature>
<feature type="helix" evidence="20">
    <location>
        <begin position="287"/>
        <end position="297"/>
    </location>
</feature>
<feature type="helix" evidence="20">
    <location>
        <begin position="301"/>
        <end position="303"/>
    </location>
</feature>
<feature type="strand" evidence="20">
    <location>
        <begin position="304"/>
        <end position="308"/>
    </location>
</feature>
<feature type="helix" evidence="20">
    <location>
        <begin position="319"/>
        <end position="322"/>
    </location>
</feature>
<feature type="strand" evidence="20">
    <location>
        <begin position="329"/>
        <end position="334"/>
    </location>
</feature>
<feature type="strand" evidence="21">
    <location>
        <begin position="347"/>
        <end position="353"/>
    </location>
</feature>
<feature type="strand" evidence="21">
    <location>
        <begin position="359"/>
        <end position="366"/>
    </location>
</feature>
<feature type="helix" evidence="21">
    <location>
        <begin position="371"/>
        <end position="382"/>
    </location>
</feature>
<feature type="strand" evidence="19">
    <location>
        <begin position="385"/>
        <end position="387"/>
    </location>
</feature>
<feature type="strand" evidence="21">
    <location>
        <begin position="390"/>
        <end position="393"/>
    </location>
</feature>
<feature type="helix" evidence="21">
    <location>
        <begin position="404"/>
        <end position="407"/>
    </location>
</feature>
<feature type="strand" evidence="21">
    <location>
        <begin position="414"/>
        <end position="418"/>
    </location>
</feature>
<proteinExistence type="evidence at protein level"/>
<accession>Q8NCF5</accession>
<accession>B7Z4G5</accession>
<accession>Q66K34</accession>
<accession>Q6NVK1</accession>
<accession>Q8NFR2</accession>
<accession>Q96ST9</accession>
<sequence length="419" mass="45817">MAEPVGKRGRWSGGSGAGRGGRGGWGGRGRRPRAQRSPSRGTLDVVSVDLVTDSDEEILEVATARGAADEVEVEPPEPPGPVASRDNSNSDSEGEDRRPAGPPREPVRRRRRLVLDPGEAPLVPVYSGKVKSSLRLIPDDLSLLKLYPPGDEEEAELADSSGLYHEGSPSPGSPWKTKLRTKDKEEKKKTEFLDLDNSPLSPPSPRTKSRTHTRALKKLSEVNKRLQDLRSCLSPKPPQGQEQQGQEDEVVLVEGPTLPETPRLFPLKIRCRADLVRLPLRMSEPLQSVVDHMATHLGVSPSRILLLFGETELSPTATPRTLKLGVADIIDCVVLTSSPEATETSQQLQLRVQGKEKHQTLEVSLSRDSPLKTLMSHYEEAMGLSGRKLSFFFDGTKLSGRELPADLGMESGDLIEVWG</sequence>
<comment type="function">
    <text evidence="1">In T-helper 2 (Th2) cells, regulates the magnitude of NFAT-driven transcription of a specific subset of cytokine genes, including IL3, IL4, IL5 and IL13, but not IL2. Recruits PRMT1 to the IL4 promoter; this leads to enhancement of histone H4 'Arg-3'-methylation and facilitates subsequent histone acetylation at the IL4 locus, thus promotes robust cytokine expression (By similarity). Down-regulates formation of poly-SUMO chains by UBE2I/UBC9 (By similarity).</text>
</comment>
<comment type="subunit">
    <text evidence="1">Interacts with NFATC2, TRAF1, TRAF2 and PRMT1. Interacts with UBE2I/UBC9 (By similarity).</text>
</comment>
<comment type="interaction">
    <interactant intactId="EBI-12305293">
        <id>Q8NCF5-2</id>
    </interactant>
    <interactant intactId="EBI-7317823">
        <id>Q6P5X5</id>
        <label>C22orf39</label>
    </interactant>
    <organismsDiffer>false</organismsDiffer>
    <experiments>5</experiments>
</comment>
<comment type="interaction">
    <interactant intactId="EBI-12305293">
        <id>Q8NCF5-2</id>
    </interactant>
    <interactant intactId="EBI-1049597">
        <id>P27797</id>
        <label>CALR</label>
    </interactant>
    <organismsDiffer>false</organismsDiffer>
    <experiments>3</experiments>
</comment>
<comment type="interaction">
    <interactant intactId="EBI-12305293">
        <id>Q8NCF5-2</id>
    </interactant>
    <interactant intactId="EBI-13289565">
        <id>Q569K6</id>
        <label>CCDC157</label>
    </interactant>
    <organismsDiffer>false</organismsDiffer>
    <experiments>3</experiments>
</comment>
<comment type="interaction">
    <interactant intactId="EBI-12305293">
        <id>Q8NCF5-2</id>
    </interactant>
    <interactant intactId="EBI-351007">
        <id>P36957</id>
        <label>DLST</label>
    </interactant>
    <organismsDiffer>false</organismsDiffer>
    <experiments>3</experiments>
</comment>
<comment type="interaction">
    <interactant intactId="EBI-12305293">
        <id>Q8NCF5-2</id>
    </interactant>
    <interactant intactId="EBI-742362">
        <id>O96015</id>
        <label>DNAL4</label>
    </interactant>
    <organismsDiffer>false</organismsDiffer>
    <experiments>6</experiments>
</comment>
<comment type="interaction">
    <interactant intactId="EBI-12305293">
        <id>Q8NCF5-2</id>
    </interactant>
    <interactant intactId="EBI-1055945">
        <id>Q8TDX7</id>
        <label>NEK7</label>
    </interactant>
    <organismsDiffer>false</organismsDiffer>
    <experiments>3</experiments>
</comment>
<comment type="interaction">
    <interactant intactId="EBI-12305293">
        <id>Q8NCF5-2</id>
    </interactant>
    <interactant intactId="EBI-3917542">
        <id>Q9HAN9</id>
        <label>NMNAT1</label>
    </interactant>
    <organismsDiffer>false</organismsDiffer>
    <experiments>3</experiments>
</comment>
<comment type="interaction">
    <interactant intactId="EBI-12305293">
        <id>Q8NCF5-2</id>
    </interactant>
    <interactant intactId="EBI-624585">
        <id>P62308</id>
        <label>SNRPG</label>
    </interactant>
    <organismsDiffer>false</organismsDiffer>
    <experiments>3</experiments>
</comment>
<comment type="subcellular location">
    <subcellularLocation>
        <location evidence="1">Nucleus</location>
    </subcellularLocation>
    <subcellularLocation>
        <location evidence="1">Cytoplasm</location>
    </subcellularLocation>
    <text evidence="1">TRAF1 is associated with a fraction of NFATC2IP in the cytoplasm and prevents its translocation to the nucleus.</text>
</comment>
<comment type="alternative products">
    <event type="alternative splicing"/>
    <isoform>
        <id>Q8NCF5-1</id>
        <name>1</name>
        <sequence type="displayed"/>
    </isoform>
    <isoform>
        <id>Q8NCF5-2</id>
        <name>2</name>
        <sequence type="described" ref="VSP_023932"/>
    </isoform>
    <isoform>
        <id>Q8NCF5-3</id>
        <name>3</name>
        <sequence type="described" ref="VSP_023931"/>
    </isoform>
</comment>
<comment type="PTM">
    <text evidence="1">Methylation at the N-terminus by PRMT1 modulates interaction with the NFAT complex and results in augmented cytokine production.</text>
</comment>
<comment type="sequence caution" evidence="9">
    <conflict type="frameshift">
        <sequence resource="EMBL-CDS" id="AAM49721"/>
    </conflict>
</comment>
<protein>
    <recommendedName>
        <fullName>NFATC2-interacting protein</fullName>
    </recommendedName>
    <alternativeName>
        <fullName>45 kDa NF-AT-interacting protein</fullName>
        <shortName>45 kDa NFAT-interacting protein</shortName>
    </alternativeName>
    <alternativeName>
        <fullName>Nuclear factor of activated T-cells, cytoplasmic 2-interacting protein</fullName>
    </alternativeName>
</protein>